<gene>
    <name evidence="1" type="primary">lpxA</name>
</gene>
<feature type="chain" id="PRO_0000188057" description="Acyl-[acyl-carrier-protein]--UDP-N-acetylglucosamine O-acyltransferase">
    <location>
        <begin position="1"/>
        <end position="267"/>
    </location>
</feature>
<evidence type="ECO:0000255" key="1">
    <source>
        <dbReference type="HAMAP-Rule" id="MF_00387"/>
    </source>
</evidence>
<keyword id="KW-0012">Acyltransferase</keyword>
<keyword id="KW-0963">Cytoplasm</keyword>
<keyword id="KW-0441">Lipid A biosynthesis</keyword>
<keyword id="KW-0444">Lipid biosynthesis</keyword>
<keyword id="KW-0443">Lipid metabolism</keyword>
<keyword id="KW-0677">Repeat</keyword>
<keyword id="KW-0808">Transferase</keyword>
<proteinExistence type="inferred from homology"/>
<comment type="function">
    <text evidence="1">Involved in the biosynthesis of lipid A, a phosphorylated glycolipid that anchors the lipopolysaccharide to the outer membrane of the cell.</text>
</comment>
<comment type="catalytic activity">
    <reaction evidence="1">
        <text>a (3R)-hydroxyacyl-[ACP] + UDP-N-acetyl-alpha-D-glucosamine = a UDP-3-O-[(3R)-3-hydroxyacyl]-N-acetyl-alpha-D-glucosamine + holo-[ACP]</text>
        <dbReference type="Rhea" id="RHEA:67812"/>
        <dbReference type="Rhea" id="RHEA-COMP:9685"/>
        <dbReference type="Rhea" id="RHEA-COMP:9945"/>
        <dbReference type="ChEBI" id="CHEBI:57705"/>
        <dbReference type="ChEBI" id="CHEBI:64479"/>
        <dbReference type="ChEBI" id="CHEBI:78827"/>
        <dbReference type="ChEBI" id="CHEBI:173225"/>
        <dbReference type="EC" id="2.3.1.129"/>
    </reaction>
</comment>
<comment type="pathway">
    <text evidence="1">Glycolipid biosynthesis; lipid IV(A) biosynthesis; lipid IV(A) from (3R)-3-hydroxytetradecanoyl-[acyl-carrier-protein] and UDP-N-acetyl-alpha-D-glucosamine: step 1/6.</text>
</comment>
<comment type="subunit">
    <text evidence="1">Homotrimer.</text>
</comment>
<comment type="subcellular location">
    <subcellularLocation>
        <location evidence="1">Cytoplasm</location>
    </subcellularLocation>
</comment>
<comment type="similarity">
    <text evidence="1">Belongs to the transferase hexapeptide repeat family. LpxA subfamily.</text>
</comment>
<dbReference type="EC" id="2.3.1.129" evidence="1"/>
<dbReference type="EMBL" id="Y09263">
    <property type="protein sequence ID" value="CAA70456.1"/>
    <property type="molecule type" value="Genomic_DNA"/>
</dbReference>
<dbReference type="RefSeq" id="WP_004245460.1">
    <property type="nucleotide sequence ID" value="NZ_WNBD01000005.1"/>
</dbReference>
<dbReference type="SMR" id="P72215"/>
<dbReference type="STRING" id="584.AOUC001_03420"/>
<dbReference type="GeneID" id="6802184"/>
<dbReference type="OMA" id="ECVTINR"/>
<dbReference type="OrthoDB" id="9807278at2"/>
<dbReference type="UniPathway" id="UPA00359">
    <property type="reaction ID" value="UER00477"/>
</dbReference>
<dbReference type="GO" id="GO:0005737">
    <property type="term" value="C:cytoplasm"/>
    <property type="evidence" value="ECO:0007669"/>
    <property type="project" value="UniProtKB-SubCell"/>
</dbReference>
<dbReference type="GO" id="GO:0016020">
    <property type="term" value="C:membrane"/>
    <property type="evidence" value="ECO:0007669"/>
    <property type="project" value="GOC"/>
</dbReference>
<dbReference type="GO" id="GO:0008780">
    <property type="term" value="F:acyl-[acyl-carrier-protein]-UDP-N-acetylglucosamine O-acyltransferase activity"/>
    <property type="evidence" value="ECO:0007669"/>
    <property type="project" value="UniProtKB-UniRule"/>
</dbReference>
<dbReference type="GO" id="GO:0009245">
    <property type="term" value="P:lipid A biosynthetic process"/>
    <property type="evidence" value="ECO:0007669"/>
    <property type="project" value="UniProtKB-UniRule"/>
</dbReference>
<dbReference type="CDD" id="cd03351">
    <property type="entry name" value="LbH_UDP-GlcNAc_AT"/>
    <property type="match status" value="1"/>
</dbReference>
<dbReference type="FunFam" id="2.160.10.10:FF:000003">
    <property type="entry name" value="Acyl-[acyl-carrier-protein]--UDP-N-acetylglucosamine O-acyltransferase"/>
    <property type="match status" value="1"/>
</dbReference>
<dbReference type="Gene3D" id="2.160.10.10">
    <property type="entry name" value="Hexapeptide repeat proteins"/>
    <property type="match status" value="1"/>
</dbReference>
<dbReference type="Gene3D" id="1.20.1180.10">
    <property type="entry name" value="Udp N-acetylglucosamine O-acyltransferase, C-terminal domain"/>
    <property type="match status" value="1"/>
</dbReference>
<dbReference type="HAMAP" id="MF_00387">
    <property type="entry name" value="LpxA"/>
    <property type="match status" value="1"/>
</dbReference>
<dbReference type="InterPro" id="IPR029098">
    <property type="entry name" value="Acetyltransf_C"/>
</dbReference>
<dbReference type="InterPro" id="IPR037157">
    <property type="entry name" value="Acetyltransf_C_sf"/>
</dbReference>
<dbReference type="InterPro" id="IPR001451">
    <property type="entry name" value="Hexapep"/>
</dbReference>
<dbReference type="InterPro" id="IPR018357">
    <property type="entry name" value="Hexapep_transf_CS"/>
</dbReference>
<dbReference type="InterPro" id="IPR010137">
    <property type="entry name" value="Lipid_A_LpxA"/>
</dbReference>
<dbReference type="InterPro" id="IPR011004">
    <property type="entry name" value="Trimer_LpxA-like_sf"/>
</dbReference>
<dbReference type="NCBIfam" id="TIGR01852">
    <property type="entry name" value="lipid_A_lpxA"/>
    <property type="match status" value="1"/>
</dbReference>
<dbReference type="NCBIfam" id="NF003657">
    <property type="entry name" value="PRK05289.1"/>
    <property type="match status" value="1"/>
</dbReference>
<dbReference type="PANTHER" id="PTHR43480">
    <property type="entry name" value="ACYL-[ACYL-CARRIER-PROTEIN]--UDP-N-ACETYLGLUCOSAMINE O-ACYLTRANSFERASE"/>
    <property type="match status" value="1"/>
</dbReference>
<dbReference type="PANTHER" id="PTHR43480:SF1">
    <property type="entry name" value="ACYL-[ACYL-CARRIER-PROTEIN]--UDP-N-ACETYLGLUCOSAMINE O-ACYLTRANSFERASE, MITOCHONDRIAL-RELATED"/>
    <property type="match status" value="1"/>
</dbReference>
<dbReference type="Pfam" id="PF13720">
    <property type="entry name" value="Acetyltransf_11"/>
    <property type="match status" value="1"/>
</dbReference>
<dbReference type="Pfam" id="PF00132">
    <property type="entry name" value="Hexapep"/>
    <property type="match status" value="2"/>
</dbReference>
<dbReference type="PIRSF" id="PIRSF000456">
    <property type="entry name" value="UDP-GlcNAc_acltr"/>
    <property type="match status" value="1"/>
</dbReference>
<dbReference type="SUPFAM" id="SSF51161">
    <property type="entry name" value="Trimeric LpxA-like enzymes"/>
    <property type="match status" value="1"/>
</dbReference>
<dbReference type="PROSITE" id="PS00101">
    <property type="entry name" value="HEXAPEP_TRANSFERASES"/>
    <property type="match status" value="2"/>
</dbReference>
<protein>
    <recommendedName>
        <fullName evidence="1">Acyl-[acyl-carrier-protein]--UDP-N-acetylglucosamine O-acyltransferase</fullName>
        <shortName evidence="1">UDP-N-acetylglucosamine acyltransferase</shortName>
        <ecNumber evidence="1">2.3.1.129</ecNumber>
    </recommendedName>
</protein>
<accession>P72215</accession>
<reference key="1">
    <citation type="submission" date="1996-11" db="EMBL/GenBank/DDBJ databases">
        <authorList>
            <person name="Servos S."/>
            <person name="Khan S.A."/>
            <person name="Papakonstantinopoulou A."/>
            <person name="Dougan G."/>
            <person name="Maskell D."/>
        </authorList>
    </citation>
    <scope>NUCLEOTIDE SEQUENCE [GENOMIC DNA]</scope>
    <source>
        <strain>PR 990</strain>
    </source>
</reference>
<name>LPXA_PROMI</name>
<sequence>MIDKSAVIHPSSIIEEGAVIGANVRIGPFCVIGSHVEIGEGTDIKSHVVINGHTRIGRDNQIYQFASIGEVNQDLKYRGEPTQVIIGDRNLIRESVTIHRGTTQGGNITKIGNDNLLMINTHVAHDCIIGDRCIIANNGTLGGHVTLGDYVIIGGMSAVHQFCQIGSHVMVGGCSGVAQDVPPFVIAQGNHATPYGLNIEGLKRRGFAKEDLHAIRNAYKILYRNGKTLEEAREEIAQLAADNNNQYVKIFSDFLENSAKSNRGIIR</sequence>
<organism>
    <name type="scientific">Proteus mirabilis</name>
    <dbReference type="NCBI Taxonomy" id="584"/>
    <lineage>
        <taxon>Bacteria</taxon>
        <taxon>Pseudomonadati</taxon>
        <taxon>Pseudomonadota</taxon>
        <taxon>Gammaproteobacteria</taxon>
        <taxon>Enterobacterales</taxon>
        <taxon>Morganellaceae</taxon>
        <taxon>Proteus</taxon>
    </lineage>
</organism>